<protein>
    <recommendedName>
        <fullName evidence="1">Fibrillarin-like rRNA/tRNA 2'-O-methyltransferase</fullName>
        <ecNumber evidence="1">2.1.1.-</ecNumber>
    </recommendedName>
</protein>
<feature type="chain" id="PRO_1000006943" description="Fibrillarin-like rRNA/tRNA 2'-O-methyltransferase">
    <location>
        <begin position="1"/>
        <end position="234"/>
    </location>
</feature>
<feature type="binding site" evidence="1">
    <location>
        <begin position="91"/>
        <end position="92"/>
    </location>
    <ligand>
        <name>S-adenosyl-L-methionine</name>
        <dbReference type="ChEBI" id="CHEBI:59789"/>
    </ligand>
</feature>
<feature type="binding site" evidence="1">
    <location>
        <begin position="110"/>
        <end position="111"/>
    </location>
    <ligand>
        <name>S-adenosyl-L-methionine</name>
        <dbReference type="ChEBI" id="CHEBI:59789"/>
    </ligand>
</feature>
<feature type="binding site" evidence="1">
    <location>
        <begin position="137"/>
        <end position="138"/>
    </location>
    <ligand>
        <name>S-adenosyl-L-methionine</name>
        <dbReference type="ChEBI" id="CHEBI:59789"/>
    </ligand>
</feature>
<feature type="binding site" evidence="1">
    <location>
        <begin position="157"/>
        <end position="160"/>
    </location>
    <ligand>
        <name>S-adenosyl-L-methionine</name>
        <dbReference type="ChEBI" id="CHEBI:59789"/>
    </ligand>
</feature>
<evidence type="ECO:0000255" key="1">
    <source>
        <dbReference type="HAMAP-Rule" id="MF_00351"/>
    </source>
</evidence>
<reference key="1">
    <citation type="submission" date="2007-02" db="EMBL/GenBank/DDBJ databases">
        <title>Complete sequence of Pyrobaculum calidifontis JCM 11548.</title>
        <authorList>
            <consortium name="US DOE Joint Genome Institute"/>
            <person name="Copeland A."/>
            <person name="Lucas S."/>
            <person name="Lapidus A."/>
            <person name="Barry K."/>
            <person name="Glavina del Rio T."/>
            <person name="Dalin E."/>
            <person name="Tice H."/>
            <person name="Pitluck S."/>
            <person name="Chain P."/>
            <person name="Malfatti S."/>
            <person name="Shin M."/>
            <person name="Vergez L."/>
            <person name="Schmutz J."/>
            <person name="Larimer F."/>
            <person name="Land M."/>
            <person name="Hauser L."/>
            <person name="Kyrpides N."/>
            <person name="Mikhailova N."/>
            <person name="Cozen A.E."/>
            <person name="Fitz-Gibbon S.T."/>
            <person name="House C.H."/>
            <person name="Saltikov C."/>
            <person name="Lowe T.M."/>
            <person name="Richardson P."/>
        </authorList>
    </citation>
    <scope>NUCLEOTIDE SEQUENCE [LARGE SCALE GENOMIC DNA]</scope>
    <source>
        <strain>DSM 21063 / JCM 11548 / VA1</strain>
    </source>
</reference>
<name>FLPA_PYRCJ</name>
<sequence length="234" mass="26601">MSIEVVEVRPHELHYGVYVVRFEDGTERLATRNLTPGRRVYGERLIKWEGVEYREWNPYRSKLAAAILNGLKLVPIREGTHMLYLGAASGTTPSHISDIVGERGLIYSVEFSPRVFREFMEKLVDQGRRNVIPILGDARFPYQYAHYIKGVDVVYIDVAQPAQAKILADNADYFLKPGGYVMLVIKAMSIDVTAPATETFKQEINTLKERGFDVLETVHLEPYDTAHAMVIARK</sequence>
<comment type="function">
    <text evidence="1">Involved in pre-rRNA and tRNA processing. Utilizes the methyl donor S-adenosyl-L-methionine to catalyze the site-specific 2'-hydroxyl methylation of ribose moieties in rRNA and tRNA. Site specificity is provided by a guide RNA that base pairs with the substrate. Methylation occurs at a characteristic distance from the sequence involved in base pairing with the guide RNA.</text>
</comment>
<comment type="subunit">
    <text evidence="1">Interacts with nop5. Component of box C/D small ribonucleoprotein (sRNP) particles that contain rpl7ae, FlpA and nop5, plus a guide RNA.</text>
</comment>
<comment type="similarity">
    <text evidence="1">Belongs to the methyltransferase superfamily. Fibrillarin family.</text>
</comment>
<proteinExistence type="inferred from homology"/>
<dbReference type="EC" id="2.1.1.-" evidence="1"/>
<dbReference type="EMBL" id="CP000561">
    <property type="protein sequence ID" value="ABO08532.1"/>
    <property type="molecule type" value="Genomic_DNA"/>
</dbReference>
<dbReference type="RefSeq" id="WP_011849790.1">
    <property type="nucleotide sequence ID" value="NC_009073.1"/>
</dbReference>
<dbReference type="SMR" id="A3MV65"/>
<dbReference type="STRING" id="410359.Pcal_1107"/>
<dbReference type="GeneID" id="4909150"/>
<dbReference type="KEGG" id="pcl:Pcal_1107"/>
<dbReference type="eggNOG" id="arCOG00078">
    <property type="taxonomic scope" value="Archaea"/>
</dbReference>
<dbReference type="HOGENOM" id="CLU_059055_2_0_2"/>
<dbReference type="OrthoDB" id="6244at2157"/>
<dbReference type="Proteomes" id="UP000001431">
    <property type="component" value="Chromosome"/>
</dbReference>
<dbReference type="GO" id="GO:1990259">
    <property type="term" value="F:histone H2AQ104 methyltransferase activity"/>
    <property type="evidence" value="ECO:0007669"/>
    <property type="project" value="TreeGrafter"/>
</dbReference>
<dbReference type="GO" id="GO:0003723">
    <property type="term" value="F:RNA binding"/>
    <property type="evidence" value="ECO:0007669"/>
    <property type="project" value="UniProtKB-UniRule"/>
</dbReference>
<dbReference type="GO" id="GO:0008649">
    <property type="term" value="F:rRNA methyltransferase activity"/>
    <property type="evidence" value="ECO:0007669"/>
    <property type="project" value="TreeGrafter"/>
</dbReference>
<dbReference type="GO" id="GO:0000494">
    <property type="term" value="P:box C/D sno(s)RNA 3'-end processing"/>
    <property type="evidence" value="ECO:0007669"/>
    <property type="project" value="TreeGrafter"/>
</dbReference>
<dbReference type="GO" id="GO:0008033">
    <property type="term" value="P:tRNA processing"/>
    <property type="evidence" value="ECO:0007669"/>
    <property type="project" value="UniProtKB-UniRule"/>
</dbReference>
<dbReference type="CDD" id="cd02440">
    <property type="entry name" value="AdoMet_MTases"/>
    <property type="match status" value="1"/>
</dbReference>
<dbReference type="FunFam" id="3.30.200.20:FF:000613">
    <property type="entry name" value="Fibrillarin-like rRNA/tRNA 2'-O-methyltransferase"/>
    <property type="match status" value="1"/>
</dbReference>
<dbReference type="Gene3D" id="3.30.200.20">
    <property type="entry name" value="Phosphorylase Kinase, domain 1"/>
    <property type="match status" value="1"/>
</dbReference>
<dbReference type="Gene3D" id="3.40.50.150">
    <property type="entry name" value="Vaccinia Virus protein VP39"/>
    <property type="match status" value="1"/>
</dbReference>
<dbReference type="HAMAP" id="MF_00351">
    <property type="entry name" value="RNA_methyltransf_FlpA"/>
    <property type="match status" value="1"/>
</dbReference>
<dbReference type="InterPro" id="IPR000692">
    <property type="entry name" value="Fibrillarin"/>
</dbReference>
<dbReference type="InterPro" id="IPR020813">
    <property type="entry name" value="Fibrillarin_CS"/>
</dbReference>
<dbReference type="InterPro" id="IPR029063">
    <property type="entry name" value="SAM-dependent_MTases_sf"/>
</dbReference>
<dbReference type="NCBIfam" id="NF003275">
    <property type="entry name" value="PRK04266.1-1"/>
    <property type="match status" value="1"/>
</dbReference>
<dbReference type="NCBIfam" id="NF003276">
    <property type="entry name" value="PRK04266.1-2"/>
    <property type="match status" value="1"/>
</dbReference>
<dbReference type="NCBIfam" id="NF003277">
    <property type="entry name" value="PRK04266.1-3"/>
    <property type="match status" value="1"/>
</dbReference>
<dbReference type="PANTHER" id="PTHR10335:SF17">
    <property type="entry name" value="FIBRILLARIN"/>
    <property type="match status" value="1"/>
</dbReference>
<dbReference type="PANTHER" id="PTHR10335">
    <property type="entry name" value="RRNA 2-O-METHYLTRANSFERASE FIBRILLARIN"/>
    <property type="match status" value="1"/>
</dbReference>
<dbReference type="Pfam" id="PF01269">
    <property type="entry name" value="Fibrillarin"/>
    <property type="match status" value="1"/>
</dbReference>
<dbReference type="PIRSF" id="PIRSF006540">
    <property type="entry name" value="Nop17p"/>
    <property type="match status" value="1"/>
</dbReference>
<dbReference type="PRINTS" id="PR00052">
    <property type="entry name" value="FIBRILLARIN"/>
</dbReference>
<dbReference type="SMART" id="SM01206">
    <property type="entry name" value="Fibrillarin"/>
    <property type="match status" value="1"/>
</dbReference>
<dbReference type="SUPFAM" id="SSF53335">
    <property type="entry name" value="S-adenosyl-L-methionine-dependent methyltransferases"/>
    <property type="match status" value="1"/>
</dbReference>
<dbReference type="PROSITE" id="PS00566">
    <property type="entry name" value="FIBRILLARIN"/>
    <property type="match status" value="1"/>
</dbReference>
<gene>
    <name evidence="1" type="primary">flpA</name>
    <name type="ordered locus">Pcal_1107</name>
</gene>
<keyword id="KW-0489">Methyltransferase</keyword>
<keyword id="KW-0694">RNA-binding</keyword>
<keyword id="KW-0698">rRNA processing</keyword>
<keyword id="KW-0808">Transferase</keyword>
<keyword id="KW-0819">tRNA processing</keyword>
<organism>
    <name type="scientific">Pyrobaculum calidifontis (strain DSM 21063 / JCM 11548 / VA1)</name>
    <dbReference type="NCBI Taxonomy" id="410359"/>
    <lineage>
        <taxon>Archaea</taxon>
        <taxon>Thermoproteota</taxon>
        <taxon>Thermoprotei</taxon>
        <taxon>Thermoproteales</taxon>
        <taxon>Thermoproteaceae</taxon>
        <taxon>Pyrobaculum</taxon>
    </lineage>
</organism>
<accession>A3MV65</accession>